<comment type="subcellular location">
    <subcellularLocation>
        <location evidence="3">Virion</location>
    </subcellularLocation>
</comment>
<protein>
    <recommendedName>
        <fullName>Uncharacterized protein L488</fullName>
    </recommendedName>
</protein>
<dbReference type="EMBL" id="AY653733">
    <property type="protein sequence ID" value="AAV50754.1"/>
    <property type="molecule type" value="Genomic_DNA"/>
</dbReference>
<dbReference type="SMR" id="Q5UQF8"/>
<dbReference type="Proteomes" id="UP000001134">
    <property type="component" value="Genome"/>
</dbReference>
<dbReference type="GO" id="GO:0044423">
    <property type="term" value="C:virion component"/>
    <property type="evidence" value="ECO:0007669"/>
    <property type="project" value="UniProtKB-KW"/>
</dbReference>
<dbReference type="Gene3D" id="1.25.40.20">
    <property type="entry name" value="Ankyrin repeat-containing domain"/>
    <property type="match status" value="1"/>
</dbReference>
<dbReference type="InterPro" id="IPR036770">
    <property type="entry name" value="Ankyrin_rpt-contain_sf"/>
</dbReference>
<gene>
    <name type="ordered locus">MIMI_L488</name>
</gene>
<sequence length="559" mass="63172">MLTKNTNNFSNSSNDPLNLYLNKNYAALANSDLTKKIDSDGNTVVHKMAKNLDHDAFDSILKHNPTAFKYNVINTANKRSELPIHKAMETLQSGGDPDHGFIDYLINGLGANPNVPDASGRTITQVNPTTYNPTNPTGSTNVPGITHLPSNAVNDQSVKQLNDQVIKNIRNLAKTAEDNINKISPKLGQSLRDKGVTPDSITNAAKNVVDRMPMIDKFFGKQTANQVGTVSQVTGGDNNVEFLRQLTNHYSTLRGGRSTSDRSDMNRYDSFVAKNKNSILNNYDRQYNDTFSSTGGKANKKLGDINTEDINNLFTDDAQNENSDNSMNTWGGAKKTYGNKSRSNDNSDNNDDSDDSERDIIDRRQTTKYQNMFSSQERPRERNTKVDEIYRSFVKKIMDLLGVDEETAKLYRSAIKIDIGNKNPELRKWENDELKIQEMEKIFNNKQSLQNALDKIDMDQIKSEMSRRRDESNKRRDEKRKDREEKRRQKRSQRSDTRKQGIDSVTSDEATSDQTQSTDSNNTTQTASKKRTRKSTTSQSRVGPNNYLRSEDIIISTEN</sequence>
<name>YL488_MIMIV</name>
<organism>
    <name type="scientific">Acanthamoeba polyphaga mimivirus</name>
    <name type="common">APMV</name>
    <dbReference type="NCBI Taxonomy" id="212035"/>
    <lineage>
        <taxon>Viruses</taxon>
        <taxon>Varidnaviria</taxon>
        <taxon>Bamfordvirae</taxon>
        <taxon>Nucleocytoviricota</taxon>
        <taxon>Megaviricetes</taxon>
        <taxon>Imitervirales</taxon>
        <taxon>Mimiviridae</taxon>
        <taxon>Megamimivirinae</taxon>
        <taxon>Mimivirus</taxon>
        <taxon>Mimivirus bradfordmassiliense</taxon>
    </lineage>
</organism>
<reference key="1">
    <citation type="journal article" date="2004" name="Science">
        <title>The 1.2-megabase genome sequence of Mimivirus.</title>
        <authorList>
            <person name="Raoult D."/>
            <person name="Audic S."/>
            <person name="Robert C."/>
            <person name="Abergel C."/>
            <person name="Renesto P."/>
            <person name="Ogata H."/>
            <person name="La Scola B."/>
            <person name="Susan M."/>
            <person name="Claverie J.-M."/>
        </authorList>
    </citation>
    <scope>NUCLEOTIDE SEQUENCE [LARGE SCALE GENOMIC DNA]</scope>
    <source>
        <strain>Rowbotham-Bradford</strain>
    </source>
</reference>
<reference key="2">
    <citation type="journal article" date="2006" name="J. Virol.">
        <title>Mimivirus giant particles incorporate a large fraction of anonymous and unique gene products.</title>
        <authorList>
            <person name="Renesto P."/>
            <person name="Abergel C."/>
            <person name="Decloquement P."/>
            <person name="Moinier D."/>
            <person name="Azza S."/>
            <person name="Ogata H."/>
            <person name="Fourquet P."/>
            <person name="Gorvel J.-P."/>
            <person name="Claverie J.-M."/>
            <person name="Raoult D."/>
        </authorList>
    </citation>
    <scope>IDENTIFICATION BY MASS SPECTROMETRY [LARGE SCALE ANALYSIS]</scope>
    <scope>SUBCELLULAR LOCATION</scope>
</reference>
<keyword id="KW-0175">Coiled coil</keyword>
<keyword id="KW-1185">Reference proteome</keyword>
<keyword id="KW-0946">Virion</keyword>
<proteinExistence type="evidence at protein level"/>
<evidence type="ECO:0000255" key="1"/>
<evidence type="ECO:0000256" key="2">
    <source>
        <dbReference type="SAM" id="MobiDB-lite"/>
    </source>
</evidence>
<evidence type="ECO:0000269" key="3">
    <source>
    </source>
</evidence>
<feature type="chain" id="PRO_0000247284" description="Uncharacterized protein L488">
    <location>
        <begin position="1"/>
        <end position="559"/>
    </location>
</feature>
<feature type="region of interest" description="Disordered" evidence="2">
    <location>
        <begin position="315"/>
        <end position="360"/>
    </location>
</feature>
<feature type="region of interest" description="Disordered" evidence="2">
    <location>
        <begin position="454"/>
        <end position="559"/>
    </location>
</feature>
<feature type="coiled-coil region" evidence="1">
    <location>
        <begin position="433"/>
        <end position="495"/>
    </location>
</feature>
<feature type="compositionally biased region" description="Polar residues" evidence="2">
    <location>
        <begin position="320"/>
        <end position="329"/>
    </location>
</feature>
<feature type="compositionally biased region" description="Acidic residues" evidence="2">
    <location>
        <begin position="348"/>
        <end position="357"/>
    </location>
</feature>
<feature type="compositionally biased region" description="Basic and acidic residues" evidence="2">
    <location>
        <begin position="454"/>
        <end position="501"/>
    </location>
</feature>
<feature type="compositionally biased region" description="Low complexity" evidence="2">
    <location>
        <begin position="507"/>
        <end position="527"/>
    </location>
</feature>
<accession>Q5UQF8</accession>
<organismHost>
    <name type="scientific">Acanthamoeba polyphaga</name>
    <name type="common">Amoeba</name>
    <dbReference type="NCBI Taxonomy" id="5757"/>
</organismHost>